<reference key="1">
    <citation type="journal article" date="2005" name="Nat. Genet.">
        <title>The complete genome sequence of Francisella tularensis, the causative agent of tularemia.</title>
        <authorList>
            <person name="Larsson P."/>
            <person name="Oyston P.C.F."/>
            <person name="Chain P."/>
            <person name="Chu M.C."/>
            <person name="Duffield M."/>
            <person name="Fuxelius H.-H."/>
            <person name="Garcia E."/>
            <person name="Haelltorp G."/>
            <person name="Johansson D."/>
            <person name="Isherwood K.E."/>
            <person name="Karp P.D."/>
            <person name="Larsson E."/>
            <person name="Liu Y."/>
            <person name="Michell S."/>
            <person name="Prior J."/>
            <person name="Prior R."/>
            <person name="Malfatti S."/>
            <person name="Sjoestedt A."/>
            <person name="Svensson K."/>
            <person name="Thompson N."/>
            <person name="Vergez L."/>
            <person name="Wagg J.K."/>
            <person name="Wren B.W."/>
            <person name="Lindler L.E."/>
            <person name="Andersson S.G.E."/>
            <person name="Forsman M."/>
            <person name="Titball R.W."/>
        </authorList>
    </citation>
    <scope>NUCLEOTIDE SEQUENCE [LARGE SCALE GENOMIC DNA]</scope>
    <source>
        <strain>SCHU S4 / Schu 4</strain>
    </source>
</reference>
<feature type="chain" id="PRO_0000139133" description="Methionine--tRNA ligase">
    <location>
        <begin position="1"/>
        <end position="674"/>
    </location>
</feature>
<feature type="domain" description="tRNA-binding" evidence="1">
    <location>
        <begin position="574"/>
        <end position="674"/>
    </location>
</feature>
<feature type="short sequence motif" description="'HIGH' region">
    <location>
        <begin position="11"/>
        <end position="21"/>
    </location>
</feature>
<feature type="short sequence motif" description="'KMSKS' region">
    <location>
        <begin position="330"/>
        <end position="334"/>
    </location>
</feature>
<feature type="binding site" evidence="1">
    <location>
        <position position="142"/>
    </location>
    <ligand>
        <name>Zn(2+)</name>
        <dbReference type="ChEBI" id="CHEBI:29105"/>
    </ligand>
</feature>
<feature type="binding site" evidence="1">
    <location>
        <position position="145"/>
    </location>
    <ligand>
        <name>Zn(2+)</name>
        <dbReference type="ChEBI" id="CHEBI:29105"/>
    </ligand>
</feature>
<feature type="binding site" evidence="1">
    <location>
        <position position="155"/>
    </location>
    <ligand>
        <name>Zn(2+)</name>
        <dbReference type="ChEBI" id="CHEBI:29105"/>
    </ligand>
</feature>
<feature type="binding site" evidence="1">
    <location>
        <position position="158"/>
    </location>
    <ligand>
        <name>Zn(2+)</name>
        <dbReference type="ChEBI" id="CHEBI:29105"/>
    </ligand>
</feature>
<feature type="binding site" evidence="1">
    <location>
        <position position="333"/>
    </location>
    <ligand>
        <name>ATP</name>
        <dbReference type="ChEBI" id="CHEBI:30616"/>
    </ligand>
</feature>
<keyword id="KW-0030">Aminoacyl-tRNA synthetase</keyword>
<keyword id="KW-0067">ATP-binding</keyword>
<keyword id="KW-0963">Cytoplasm</keyword>
<keyword id="KW-0436">Ligase</keyword>
<keyword id="KW-0479">Metal-binding</keyword>
<keyword id="KW-0547">Nucleotide-binding</keyword>
<keyword id="KW-0648">Protein biosynthesis</keyword>
<keyword id="KW-1185">Reference proteome</keyword>
<keyword id="KW-0694">RNA-binding</keyword>
<keyword id="KW-0820">tRNA-binding</keyword>
<keyword id="KW-0862">Zinc</keyword>
<protein>
    <recommendedName>
        <fullName evidence="1">Methionine--tRNA ligase</fullName>
        <ecNumber evidence="1">6.1.1.10</ecNumber>
    </recommendedName>
    <alternativeName>
        <fullName evidence="1">Methionyl-tRNA synthetase</fullName>
        <shortName evidence="1">MetRS</shortName>
    </alternativeName>
</protein>
<organism>
    <name type="scientific">Francisella tularensis subsp. tularensis (strain SCHU S4 / Schu 4)</name>
    <dbReference type="NCBI Taxonomy" id="177416"/>
    <lineage>
        <taxon>Bacteria</taxon>
        <taxon>Pseudomonadati</taxon>
        <taxon>Pseudomonadota</taxon>
        <taxon>Gammaproteobacteria</taxon>
        <taxon>Thiotrichales</taxon>
        <taxon>Francisellaceae</taxon>
        <taxon>Francisella</taxon>
    </lineage>
</organism>
<comment type="function">
    <text evidence="1">Is required not only for elongation of protein synthesis but also for the initiation of all mRNA translation through initiator tRNA(fMet) aminoacylation.</text>
</comment>
<comment type="catalytic activity">
    <reaction evidence="1">
        <text>tRNA(Met) + L-methionine + ATP = L-methionyl-tRNA(Met) + AMP + diphosphate</text>
        <dbReference type="Rhea" id="RHEA:13481"/>
        <dbReference type="Rhea" id="RHEA-COMP:9667"/>
        <dbReference type="Rhea" id="RHEA-COMP:9698"/>
        <dbReference type="ChEBI" id="CHEBI:30616"/>
        <dbReference type="ChEBI" id="CHEBI:33019"/>
        <dbReference type="ChEBI" id="CHEBI:57844"/>
        <dbReference type="ChEBI" id="CHEBI:78442"/>
        <dbReference type="ChEBI" id="CHEBI:78530"/>
        <dbReference type="ChEBI" id="CHEBI:456215"/>
        <dbReference type="EC" id="6.1.1.10"/>
    </reaction>
</comment>
<comment type="cofactor">
    <cofactor evidence="1">
        <name>Zn(2+)</name>
        <dbReference type="ChEBI" id="CHEBI:29105"/>
    </cofactor>
    <text evidence="1">Binds 1 zinc ion per subunit.</text>
</comment>
<comment type="subunit">
    <text evidence="1">Homodimer.</text>
</comment>
<comment type="subcellular location">
    <subcellularLocation>
        <location evidence="1">Cytoplasm</location>
    </subcellularLocation>
</comment>
<comment type="similarity">
    <text evidence="1">Belongs to the class-I aminoacyl-tRNA synthetase family. MetG type 1 subfamily.</text>
</comment>
<accession>Q5NFE7</accession>
<name>SYM_FRATT</name>
<dbReference type="EC" id="6.1.1.10" evidence="1"/>
<dbReference type="EMBL" id="AJ749949">
    <property type="protein sequence ID" value="CAG45923.1"/>
    <property type="molecule type" value="Genomic_DNA"/>
</dbReference>
<dbReference type="RefSeq" id="WP_003021984.1">
    <property type="nucleotide sequence ID" value="NC_006570.2"/>
</dbReference>
<dbReference type="RefSeq" id="YP_170245.1">
    <property type="nucleotide sequence ID" value="NC_006570.2"/>
</dbReference>
<dbReference type="SMR" id="Q5NFE7"/>
<dbReference type="STRING" id="177416.FTT_1290"/>
<dbReference type="DNASU" id="3192497"/>
<dbReference type="EnsemblBacteria" id="CAG45923">
    <property type="protein sequence ID" value="CAG45923"/>
    <property type="gene ID" value="FTT_1290"/>
</dbReference>
<dbReference type="KEGG" id="ftu:FTT_1290"/>
<dbReference type="eggNOG" id="COG0073">
    <property type="taxonomic scope" value="Bacteria"/>
</dbReference>
<dbReference type="eggNOG" id="COG0143">
    <property type="taxonomic scope" value="Bacteria"/>
</dbReference>
<dbReference type="OrthoDB" id="9810191at2"/>
<dbReference type="Proteomes" id="UP000001174">
    <property type="component" value="Chromosome"/>
</dbReference>
<dbReference type="GO" id="GO:0005829">
    <property type="term" value="C:cytosol"/>
    <property type="evidence" value="ECO:0007669"/>
    <property type="project" value="TreeGrafter"/>
</dbReference>
<dbReference type="GO" id="GO:0005524">
    <property type="term" value="F:ATP binding"/>
    <property type="evidence" value="ECO:0007669"/>
    <property type="project" value="UniProtKB-UniRule"/>
</dbReference>
<dbReference type="GO" id="GO:0046872">
    <property type="term" value="F:metal ion binding"/>
    <property type="evidence" value="ECO:0007669"/>
    <property type="project" value="UniProtKB-KW"/>
</dbReference>
<dbReference type="GO" id="GO:0004825">
    <property type="term" value="F:methionine-tRNA ligase activity"/>
    <property type="evidence" value="ECO:0007669"/>
    <property type="project" value="UniProtKB-UniRule"/>
</dbReference>
<dbReference type="GO" id="GO:0000049">
    <property type="term" value="F:tRNA binding"/>
    <property type="evidence" value="ECO:0007669"/>
    <property type="project" value="UniProtKB-KW"/>
</dbReference>
<dbReference type="GO" id="GO:0006431">
    <property type="term" value="P:methionyl-tRNA aminoacylation"/>
    <property type="evidence" value="ECO:0007669"/>
    <property type="project" value="UniProtKB-UniRule"/>
</dbReference>
<dbReference type="CDD" id="cd07957">
    <property type="entry name" value="Anticodon_Ia_Met"/>
    <property type="match status" value="1"/>
</dbReference>
<dbReference type="CDD" id="cd00814">
    <property type="entry name" value="MetRS_core"/>
    <property type="match status" value="1"/>
</dbReference>
<dbReference type="CDD" id="cd02800">
    <property type="entry name" value="tRNA_bind_EcMetRS_like"/>
    <property type="match status" value="1"/>
</dbReference>
<dbReference type="FunFam" id="1.10.730.10:FF:000005">
    <property type="entry name" value="Methionine--tRNA ligase"/>
    <property type="match status" value="1"/>
</dbReference>
<dbReference type="FunFam" id="2.20.28.20:FF:000001">
    <property type="entry name" value="Methionine--tRNA ligase"/>
    <property type="match status" value="1"/>
</dbReference>
<dbReference type="FunFam" id="2.40.50.140:FF:000042">
    <property type="entry name" value="Methionine--tRNA ligase"/>
    <property type="match status" value="1"/>
</dbReference>
<dbReference type="Gene3D" id="3.40.50.620">
    <property type="entry name" value="HUPs"/>
    <property type="match status" value="1"/>
</dbReference>
<dbReference type="Gene3D" id="1.10.730.10">
    <property type="entry name" value="Isoleucyl-tRNA Synthetase, Domain 1"/>
    <property type="match status" value="1"/>
</dbReference>
<dbReference type="Gene3D" id="2.20.28.20">
    <property type="entry name" value="Methionyl-tRNA synthetase, Zn-domain"/>
    <property type="match status" value="1"/>
</dbReference>
<dbReference type="Gene3D" id="2.40.50.140">
    <property type="entry name" value="Nucleic acid-binding proteins"/>
    <property type="match status" value="1"/>
</dbReference>
<dbReference type="HAMAP" id="MF_00098">
    <property type="entry name" value="Met_tRNA_synth_type1"/>
    <property type="match status" value="1"/>
</dbReference>
<dbReference type="InterPro" id="IPR001412">
    <property type="entry name" value="aa-tRNA-synth_I_CS"/>
</dbReference>
<dbReference type="InterPro" id="IPR041872">
    <property type="entry name" value="Anticodon_Met"/>
</dbReference>
<dbReference type="InterPro" id="IPR004495">
    <property type="entry name" value="Met-tRNA-synth_bsu_C"/>
</dbReference>
<dbReference type="InterPro" id="IPR023458">
    <property type="entry name" value="Met-tRNA_ligase_1"/>
</dbReference>
<dbReference type="InterPro" id="IPR014758">
    <property type="entry name" value="Met-tRNA_synth"/>
</dbReference>
<dbReference type="InterPro" id="IPR015413">
    <property type="entry name" value="Methionyl/Leucyl_tRNA_Synth"/>
</dbReference>
<dbReference type="InterPro" id="IPR033911">
    <property type="entry name" value="MetRS_core"/>
</dbReference>
<dbReference type="InterPro" id="IPR029038">
    <property type="entry name" value="MetRS_Zn"/>
</dbReference>
<dbReference type="InterPro" id="IPR012340">
    <property type="entry name" value="NA-bd_OB-fold"/>
</dbReference>
<dbReference type="InterPro" id="IPR014729">
    <property type="entry name" value="Rossmann-like_a/b/a_fold"/>
</dbReference>
<dbReference type="InterPro" id="IPR002547">
    <property type="entry name" value="tRNA-bd_dom"/>
</dbReference>
<dbReference type="InterPro" id="IPR009080">
    <property type="entry name" value="tRNAsynth_Ia_anticodon-bd"/>
</dbReference>
<dbReference type="NCBIfam" id="TIGR00398">
    <property type="entry name" value="metG"/>
    <property type="match status" value="1"/>
</dbReference>
<dbReference type="NCBIfam" id="TIGR00399">
    <property type="entry name" value="metG_C_term"/>
    <property type="match status" value="1"/>
</dbReference>
<dbReference type="NCBIfam" id="NF001100">
    <property type="entry name" value="PRK00133.1"/>
    <property type="match status" value="1"/>
</dbReference>
<dbReference type="PANTHER" id="PTHR45765">
    <property type="entry name" value="METHIONINE--TRNA LIGASE"/>
    <property type="match status" value="1"/>
</dbReference>
<dbReference type="PANTHER" id="PTHR45765:SF1">
    <property type="entry name" value="METHIONINE--TRNA LIGASE, CYTOPLASMIC"/>
    <property type="match status" value="1"/>
</dbReference>
<dbReference type="Pfam" id="PF19303">
    <property type="entry name" value="Anticodon_3"/>
    <property type="match status" value="1"/>
</dbReference>
<dbReference type="Pfam" id="PF09334">
    <property type="entry name" value="tRNA-synt_1g"/>
    <property type="match status" value="1"/>
</dbReference>
<dbReference type="Pfam" id="PF01588">
    <property type="entry name" value="tRNA_bind"/>
    <property type="match status" value="1"/>
</dbReference>
<dbReference type="PRINTS" id="PR01041">
    <property type="entry name" value="TRNASYNTHMET"/>
</dbReference>
<dbReference type="SUPFAM" id="SSF47323">
    <property type="entry name" value="Anticodon-binding domain of a subclass of class I aminoacyl-tRNA synthetases"/>
    <property type="match status" value="1"/>
</dbReference>
<dbReference type="SUPFAM" id="SSF57770">
    <property type="entry name" value="Methionyl-tRNA synthetase (MetRS), Zn-domain"/>
    <property type="match status" value="1"/>
</dbReference>
<dbReference type="SUPFAM" id="SSF50249">
    <property type="entry name" value="Nucleic acid-binding proteins"/>
    <property type="match status" value="1"/>
</dbReference>
<dbReference type="SUPFAM" id="SSF52374">
    <property type="entry name" value="Nucleotidylyl transferase"/>
    <property type="match status" value="1"/>
</dbReference>
<dbReference type="PROSITE" id="PS00178">
    <property type="entry name" value="AA_TRNA_LIGASE_I"/>
    <property type="match status" value="1"/>
</dbReference>
<dbReference type="PROSITE" id="PS50886">
    <property type="entry name" value="TRBD"/>
    <property type="match status" value="1"/>
</dbReference>
<sequence length="674" mass="76601">MRKILVTNALPYANGDLHLGHMLGYIQSDIWVRFQKLQGNQCIFVCGSDTHGTPIMLKAKSLGITPEELVTKYSNRHLQDFTDFEINFDNYHSTHNSLNKEIVEDIYNKLNNKNLISKKAIAQAYDPEAKMFLPDRFVKGTCPKCKAEDQYGDSCEVCGATYDPTELINPRSVISGQSPIQKNSEHFFFDLPALEKNIKDWIESNTLLQPEVANKLAEWFEQGLQSWDISRDAPYFGFAIPGTNEQKFFYVWLDAPMGYIASFKDYCNKNNINFGDFWGDSSSESELYHFIGKDIIYFHTLFWPAILSSTGYKTPTSVFANGFLTVNGKKMSKSRGTFIQARTYLDNLEPSYLRYYFASRLTSRIDDIDLNLEEFVTKSNSDIVGKVVNIASRCAGFIYKKFDATLSGEIFDPELESEFSKNHDAITQAFEKREFAHAVRLIMALADKANQFIDYHKPWQLAKEEGQEQKVHQVCSQGINMFKVLIVYLKPIIPSIVAEAERFLNIQFISWADAPKFLINHKIDKFKPLATRIEKEKVDKILEDTKKMLENEQSPQSKKEEPKLDIAAECTFDDFMKVDLRIAKITEASHVEGADKLLKLILDLGGVTKQVFAGIKSAYKPEDLIGKHTIMVANLAPRKMKFGMSEGMVLAAGDGKGIYILEPHEGAQPGMRVK</sequence>
<proteinExistence type="inferred from homology"/>
<evidence type="ECO:0000255" key="1">
    <source>
        <dbReference type="HAMAP-Rule" id="MF_00098"/>
    </source>
</evidence>
<gene>
    <name evidence="1" type="primary">metG</name>
    <name type="ordered locus">FTT_1290</name>
</gene>